<feature type="chain" id="PRO_0000400461" description="L-cysteine:1D-myo-inositol 2-amino-2-deoxy-alpha-D-glucopyranoside ligase">
    <location>
        <begin position="1"/>
        <end position="384"/>
    </location>
</feature>
<feature type="short sequence motif" description="'HIGH' region" evidence="1">
    <location>
        <begin position="18"/>
        <end position="28"/>
    </location>
</feature>
<feature type="short sequence motif" description="'ERGGDP' region" evidence="1">
    <location>
        <begin position="159"/>
        <end position="164"/>
    </location>
</feature>
<feature type="short sequence motif" description="'KMSKS' region" evidence="1">
    <location>
        <begin position="261"/>
        <end position="265"/>
    </location>
</feature>
<feature type="binding site" evidence="1">
    <location>
        <begin position="16"/>
        <end position="19"/>
    </location>
    <ligand>
        <name>L-cysteinyl-5'-AMP</name>
        <dbReference type="ChEBI" id="CHEBI:144924"/>
    </ligand>
</feature>
<feature type="binding site" evidence="1">
    <location>
        <position position="16"/>
    </location>
    <ligand>
        <name>Zn(2+)</name>
        <dbReference type="ChEBI" id="CHEBI:29105"/>
    </ligand>
</feature>
<feature type="binding site" evidence="1">
    <location>
        <position position="31"/>
    </location>
    <ligand>
        <name>L-cysteinyl-5'-AMP</name>
        <dbReference type="ChEBI" id="CHEBI:144924"/>
    </ligand>
</feature>
<feature type="binding site" evidence="1">
    <location>
        <begin position="54"/>
        <end position="56"/>
    </location>
    <ligand>
        <name>L-cysteinyl-5'-AMP</name>
        <dbReference type="ChEBI" id="CHEBI:144924"/>
    </ligand>
</feature>
<feature type="binding site" evidence="1">
    <location>
        <position position="199"/>
    </location>
    <ligand>
        <name>L-cysteinyl-5'-AMP</name>
        <dbReference type="ChEBI" id="CHEBI:144924"/>
    </ligand>
</feature>
<feature type="binding site" evidence="1">
    <location>
        <position position="203"/>
    </location>
    <ligand>
        <name>Zn(2+)</name>
        <dbReference type="ChEBI" id="CHEBI:29105"/>
    </ligand>
</feature>
<feature type="binding site" evidence="1">
    <location>
        <begin position="221"/>
        <end position="223"/>
    </location>
    <ligand>
        <name>L-cysteinyl-5'-AMP</name>
        <dbReference type="ChEBI" id="CHEBI:144924"/>
    </ligand>
</feature>
<feature type="binding site" evidence="1">
    <location>
        <position position="228"/>
    </location>
    <ligand>
        <name>Zn(2+)</name>
        <dbReference type="ChEBI" id="CHEBI:29105"/>
    </ligand>
</feature>
<feature type="binding site" evidence="1">
    <location>
        <position position="255"/>
    </location>
    <ligand>
        <name>L-cysteinyl-5'-AMP</name>
        <dbReference type="ChEBI" id="CHEBI:144924"/>
    </ligand>
</feature>
<name>MSHC_MYCLB</name>
<reference key="1">
    <citation type="journal article" date="2009" name="Nat. Genet.">
        <title>Comparative genomic and phylogeographic analysis of Mycobacterium leprae.</title>
        <authorList>
            <person name="Monot M."/>
            <person name="Honore N."/>
            <person name="Garnier T."/>
            <person name="Zidane N."/>
            <person name="Sherafi D."/>
            <person name="Paniz-Mondolfi A."/>
            <person name="Matsuoka M."/>
            <person name="Taylor G.M."/>
            <person name="Donoghue H.D."/>
            <person name="Bouwman A."/>
            <person name="Mays S."/>
            <person name="Watson C."/>
            <person name="Lockwood D."/>
            <person name="Khamispour A."/>
            <person name="Dowlati Y."/>
            <person name="Jianping S."/>
            <person name="Rea T.H."/>
            <person name="Vera-Cabrera L."/>
            <person name="Stefani M.M."/>
            <person name="Banu S."/>
            <person name="Macdonald M."/>
            <person name="Sapkota B.R."/>
            <person name="Spencer J.S."/>
            <person name="Thomas J."/>
            <person name="Harshman K."/>
            <person name="Singh P."/>
            <person name="Busso P."/>
            <person name="Gattiker A."/>
            <person name="Rougemont J."/>
            <person name="Brennan P.J."/>
            <person name="Cole S.T."/>
        </authorList>
    </citation>
    <scope>NUCLEOTIDE SEQUENCE [LARGE SCALE GENOMIC DNA]</scope>
    <source>
        <strain>Br4923</strain>
    </source>
</reference>
<organism>
    <name type="scientific">Mycobacterium leprae (strain Br4923)</name>
    <dbReference type="NCBI Taxonomy" id="561304"/>
    <lineage>
        <taxon>Bacteria</taxon>
        <taxon>Bacillati</taxon>
        <taxon>Actinomycetota</taxon>
        <taxon>Actinomycetes</taxon>
        <taxon>Mycobacteriales</taxon>
        <taxon>Mycobacteriaceae</taxon>
        <taxon>Mycobacterium</taxon>
    </lineage>
</organism>
<sequence>MSAAVAPTCKATMYVCGITPYDATHLGHAATYLAFDLIHRLWLDLGHEVHYVQNVTDVDDPLFERADRNGVDWRDLAEREVALFRDDMASLRILPPHDYVAATETIVEIVELVDKMLVSGAAYVIDDEYPDIYFRADATLQFGYESGYDRDTMLRLYEQSGGDPRRPGKNGELDALLWRAARPGEPSWSSPFGPGRPGWHVECAAIALSRIGIGLDIQGGGSDLIFPHHEFTAAHAECVRGERRFARHYVHAGMIGWDEHKMSKSRGNLVLVSTLRAQGAPPSAIRLGLLAGHYRADRFWSSQLLDDAIARLHRWRTAASMPAGPDVADVIARVRGYLADDLDTPKAIAALDGWVTDALEYGGHDAAAPKLLATAIDALLGVDL</sequence>
<accession>B8ZRD9</accession>
<evidence type="ECO:0000255" key="1">
    <source>
        <dbReference type="HAMAP-Rule" id="MF_01697"/>
    </source>
</evidence>
<gene>
    <name evidence="1" type="primary">mshC</name>
    <name type="ordered locus">MLBr01302</name>
</gene>
<keyword id="KW-0067">ATP-binding</keyword>
<keyword id="KW-0436">Ligase</keyword>
<keyword id="KW-0479">Metal-binding</keyword>
<keyword id="KW-0547">Nucleotide-binding</keyword>
<keyword id="KW-0862">Zinc</keyword>
<proteinExistence type="inferred from homology"/>
<protein>
    <recommendedName>
        <fullName evidence="1">L-cysteine:1D-myo-inositol 2-amino-2-deoxy-alpha-D-glucopyranoside ligase</fullName>
        <shortName evidence="1">L-Cys:GlcN-Ins ligase</shortName>
        <ecNumber evidence="1">6.3.1.13</ecNumber>
    </recommendedName>
    <alternativeName>
        <fullName evidence="1">Mycothiol ligase</fullName>
        <shortName evidence="1">MSH ligase</shortName>
    </alternativeName>
</protein>
<dbReference type="EC" id="6.3.1.13" evidence="1"/>
<dbReference type="EMBL" id="FM211192">
    <property type="protein sequence ID" value="CAR71397.1"/>
    <property type="molecule type" value="Genomic_DNA"/>
</dbReference>
<dbReference type="SMR" id="B8ZRD9"/>
<dbReference type="KEGG" id="mlb:MLBr01302"/>
<dbReference type="HOGENOM" id="CLU_013528_0_0_11"/>
<dbReference type="Proteomes" id="UP000006900">
    <property type="component" value="Chromosome"/>
</dbReference>
<dbReference type="GO" id="GO:0005829">
    <property type="term" value="C:cytosol"/>
    <property type="evidence" value="ECO:0007669"/>
    <property type="project" value="TreeGrafter"/>
</dbReference>
<dbReference type="GO" id="GO:0005524">
    <property type="term" value="F:ATP binding"/>
    <property type="evidence" value="ECO:0007669"/>
    <property type="project" value="UniProtKB-KW"/>
</dbReference>
<dbReference type="GO" id="GO:0035446">
    <property type="term" value="F:cysteine-glucosaminylinositol ligase activity"/>
    <property type="evidence" value="ECO:0007669"/>
    <property type="project" value="UniProtKB-UniRule"/>
</dbReference>
<dbReference type="GO" id="GO:0004817">
    <property type="term" value="F:cysteine-tRNA ligase activity"/>
    <property type="evidence" value="ECO:0007669"/>
    <property type="project" value="TreeGrafter"/>
</dbReference>
<dbReference type="GO" id="GO:0008270">
    <property type="term" value="F:zinc ion binding"/>
    <property type="evidence" value="ECO:0007669"/>
    <property type="project" value="UniProtKB-UniRule"/>
</dbReference>
<dbReference type="GO" id="GO:0006423">
    <property type="term" value="P:cysteinyl-tRNA aminoacylation"/>
    <property type="evidence" value="ECO:0007669"/>
    <property type="project" value="TreeGrafter"/>
</dbReference>
<dbReference type="GO" id="GO:0010125">
    <property type="term" value="P:mycothiol biosynthetic process"/>
    <property type="evidence" value="ECO:0007669"/>
    <property type="project" value="UniProtKB-UniRule"/>
</dbReference>
<dbReference type="CDD" id="cd07955">
    <property type="entry name" value="Anticodon_Ia_Cys_like"/>
    <property type="match status" value="1"/>
</dbReference>
<dbReference type="FunFam" id="3.40.50.620:FF:000134">
    <property type="entry name" value="L-cysteine:1D-myo-inositol 2-amino-2-deoxy-alpha-D-glucopyranoside ligase"/>
    <property type="match status" value="1"/>
</dbReference>
<dbReference type="Gene3D" id="1.20.120.640">
    <property type="entry name" value="Anticodon-binding domain of a subclass of class I aminoacyl-tRNA synthetases"/>
    <property type="match status" value="1"/>
</dbReference>
<dbReference type="Gene3D" id="3.40.50.620">
    <property type="entry name" value="HUPs"/>
    <property type="match status" value="1"/>
</dbReference>
<dbReference type="HAMAP" id="MF_01697">
    <property type="entry name" value="MshC"/>
    <property type="match status" value="1"/>
</dbReference>
<dbReference type="InterPro" id="IPR024909">
    <property type="entry name" value="Cys-tRNA/MSH_ligase"/>
</dbReference>
<dbReference type="InterPro" id="IPR017812">
    <property type="entry name" value="Mycothiol_ligase_MshC"/>
</dbReference>
<dbReference type="InterPro" id="IPR014729">
    <property type="entry name" value="Rossmann-like_a/b/a_fold"/>
</dbReference>
<dbReference type="InterPro" id="IPR032678">
    <property type="entry name" value="tRNA-synt_1_cat_dom"/>
</dbReference>
<dbReference type="NCBIfam" id="TIGR03447">
    <property type="entry name" value="mycothiol_MshC"/>
    <property type="match status" value="1"/>
</dbReference>
<dbReference type="PANTHER" id="PTHR10890:SF3">
    <property type="entry name" value="CYSTEINE--TRNA LIGASE, CYTOPLASMIC"/>
    <property type="match status" value="1"/>
</dbReference>
<dbReference type="PANTHER" id="PTHR10890">
    <property type="entry name" value="CYSTEINYL-TRNA SYNTHETASE"/>
    <property type="match status" value="1"/>
</dbReference>
<dbReference type="Pfam" id="PF01406">
    <property type="entry name" value="tRNA-synt_1e"/>
    <property type="match status" value="1"/>
</dbReference>
<dbReference type="PRINTS" id="PR00983">
    <property type="entry name" value="TRNASYNTHCYS"/>
</dbReference>
<dbReference type="SUPFAM" id="SSF52374">
    <property type="entry name" value="Nucleotidylyl transferase"/>
    <property type="match status" value="1"/>
</dbReference>
<comment type="function">
    <text evidence="1">Catalyzes the ATP-dependent condensation of GlcN-Ins and L-cysteine to form L-Cys-GlcN-Ins.</text>
</comment>
<comment type="catalytic activity">
    <reaction evidence="1">
        <text>1D-myo-inositol 2-amino-2-deoxy-alpha-D-glucopyranoside + L-cysteine + ATP = 1D-myo-inositol 2-(L-cysteinylamino)-2-deoxy-alpha-D-glucopyranoside + AMP + diphosphate + H(+)</text>
        <dbReference type="Rhea" id="RHEA:26176"/>
        <dbReference type="ChEBI" id="CHEBI:15378"/>
        <dbReference type="ChEBI" id="CHEBI:30616"/>
        <dbReference type="ChEBI" id="CHEBI:33019"/>
        <dbReference type="ChEBI" id="CHEBI:35235"/>
        <dbReference type="ChEBI" id="CHEBI:58886"/>
        <dbReference type="ChEBI" id="CHEBI:58887"/>
        <dbReference type="ChEBI" id="CHEBI:456215"/>
        <dbReference type="EC" id="6.3.1.13"/>
    </reaction>
</comment>
<comment type="cofactor">
    <cofactor evidence="1">
        <name>Zn(2+)</name>
        <dbReference type="ChEBI" id="CHEBI:29105"/>
    </cofactor>
    <text evidence="1">Binds 1 zinc ion per subunit.</text>
</comment>
<comment type="subunit">
    <text evidence="1">Monomer.</text>
</comment>
<comment type="similarity">
    <text evidence="1">Belongs to the class-I aminoacyl-tRNA synthetase family. MshC subfamily.</text>
</comment>